<name>RS18_CAMJR</name>
<keyword id="KW-0687">Ribonucleoprotein</keyword>
<keyword id="KW-0689">Ribosomal protein</keyword>
<keyword id="KW-0694">RNA-binding</keyword>
<keyword id="KW-0699">rRNA-binding</keyword>
<proteinExistence type="inferred from homology"/>
<comment type="function">
    <text evidence="1">Binds as a heterodimer with protein bS6 to the central domain of the 16S rRNA, where it helps stabilize the platform of the 30S subunit.</text>
</comment>
<comment type="subunit">
    <text evidence="1">Part of the 30S ribosomal subunit. Forms a tight heterodimer with protein bS6.</text>
</comment>
<comment type="similarity">
    <text evidence="1">Belongs to the bacterial ribosomal protein bS18 family.</text>
</comment>
<dbReference type="EMBL" id="CP000025">
    <property type="protein sequence ID" value="AAW35537.1"/>
    <property type="molecule type" value="Genomic_DNA"/>
</dbReference>
<dbReference type="RefSeq" id="WP_002853032.1">
    <property type="nucleotide sequence ID" value="NC_003912.7"/>
</dbReference>
<dbReference type="SMR" id="Q5HU32"/>
<dbReference type="KEGG" id="cjr:CJE1215"/>
<dbReference type="HOGENOM" id="CLU_148710_2_2_7"/>
<dbReference type="GO" id="GO:0022627">
    <property type="term" value="C:cytosolic small ribosomal subunit"/>
    <property type="evidence" value="ECO:0007669"/>
    <property type="project" value="TreeGrafter"/>
</dbReference>
<dbReference type="GO" id="GO:0070181">
    <property type="term" value="F:small ribosomal subunit rRNA binding"/>
    <property type="evidence" value="ECO:0007669"/>
    <property type="project" value="TreeGrafter"/>
</dbReference>
<dbReference type="GO" id="GO:0003735">
    <property type="term" value="F:structural constituent of ribosome"/>
    <property type="evidence" value="ECO:0007669"/>
    <property type="project" value="InterPro"/>
</dbReference>
<dbReference type="GO" id="GO:0006412">
    <property type="term" value="P:translation"/>
    <property type="evidence" value="ECO:0007669"/>
    <property type="project" value="UniProtKB-UniRule"/>
</dbReference>
<dbReference type="FunFam" id="4.10.640.10:FF:000005">
    <property type="entry name" value="30S ribosomal protein S18"/>
    <property type="match status" value="1"/>
</dbReference>
<dbReference type="Gene3D" id="4.10.640.10">
    <property type="entry name" value="Ribosomal protein S18"/>
    <property type="match status" value="1"/>
</dbReference>
<dbReference type="HAMAP" id="MF_00270">
    <property type="entry name" value="Ribosomal_bS18"/>
    <property type="match status" value="1"/>
</dbReference>
<dbReference type="InterPro" id="IPR001648">
    <property type="entry name" value="Ribosomal_bS18"/>
</dbReference>
<dbReference type="InterPro" id="IPR036870">
    <property type="entry name" value="Ribosomal_bS18_sf"/>
</dbReference>
<dbReference type="NCBIfam" id="TIGR00165">
    <property type="entry name" value="S18"/>
    <property type="match status" value="1"/>
</dbReference>
<dbReference type="PANTHER" id="PTHR13479">
    <property type="entry name" value="30S RIBOSOMAL PROTEIN S18"/>
    <property type="match status" value="1"/>
</dbReference>
<dbReference type="PANTHER" id="PTHR13479:SF40">
    <property type="entry name" value="SMALL RIBOSOMAL SUBUNIT PROTEIN BS18M"/>
    <property type="match status" value="1"/>
</dbReference>
<dbReference type="Pfam" id="PF01084">
    <property type="entry name" value="Ribosomal_S18"/>
    <property type="match status" value="1"/>
</dbReference>
<dbReference type="PRINTS" id="PR00974">
    <property type="entry name" value="RIBOSOMALS18"/>
</dbReference>
<dbReference type="SUPFAM" id="SSF46911">
    <property type="entry name" value="Ribosomal protein S18"/>
    <property type="match status" value="1"/>
</dbReference>
<accession>Q5HU32</accession>
<organism>
    <name type="scientific">Campylobacter jejuni (strain RM1221)</name>
    <dbReference type="NCBI Taxonomy" id="195099"/>
    <lineage>
        <taxon>Bacteria</taxon>
        <taxon>Pseudomonadati</taxon>
        <taxon>Campylobacterota</taxon>
        <taxon>Epsilonproteobacteria</taxon>
        <taxon>Campylobacterales</taxon>
        <taxon>Campylobacteraceae</taxon>
        <taxon>Campylobacter</taxon>
    </lineage>
</organism>
<evidence type="ECO:0000255" key="1">
    <source>
        <dbReference type="HAMAP-Rule" id="MF_00270"/>
    </source>
</evidence>
<evidence type="ECO:0000305" key="2"/>
<gene>
    <name evidence="1" type="primary">rpsR</name>
    <name type="ordered locus">CJE1215</name>
</gene>
<reference key="1">
    <citation type="journal article" date="2005" name="PLoS Biol.">
        <title>Major structural differences and novel potential virulence mechanisms from the genomes of multiple Campylobacter species.</title>
        <authorList>
            <person name="Fouts D.E."/>
            <person name="Mongodin E.F."/>
            <person name="Mandrell R.E."/>
            <person name="Miller W.G."/>
            <person name="Rasko D.A."/>
            <person name="Ravel J."/>
            <person name="Brinkac L.M."/>
            <person name="DeBoy R.T."/>
            <person name="Parker C.T."/>
            <person name="Daugherty S.C."/>
            <person name="Dodson R.J."/>
            <person name="Durkin A.S."/>
            <person name="Madupu R."/>
            <person name="Sullivan S.A."/>
            <person name="Shetty J.U."/>
            <person name="Ayodeji M.A."/>
            <person name="Shvartsbeyn A."/>
            <person name="Schatz M.C."/>
            <person name="Badger J.H."/>
            <person name="Fraser C.M."/>
            <person name="Nelson K.E."/>
        </authorList>
    </citation>
    <scope>NUCLEOTIDE SEQUENCE [LARGE SCALE GENOMIC DNA]</scope>
    <source>
        <strain>RM1221</strain>
    </source>
</reference>
<sequence length="86" mass="10271">MAEKRKYSRKYCKYTEAKVEFIDYKDTAMLKHALSERFKIMPRRLTGTSKKYQEMVEVAIKRARHVALIPYIVDRKEVINNPFEGL</sequence>
<feature type="chain" id="PRO_1000003476" description="Small ribosomal subunit protein bS18">
    <location>
        <begin position="1"/>
        <end position="86"/>
    </location>
</feature>
<protein>
    <recommendedName>
        <fullName evidence="1">Small ribosomal subunit protein bS18</fullName>
    </recommendedName>
    <alternativeName>
        <fullName evidence="2">30S ribosomal protein S18</fullName>
    </alternativeName>
</protein>